<reference key="1">
    <citation type="submission" date="2006-12" db="EMBL/GenBank/DDBJ databases">
        <authorList>
            <person name="Hendrix L."/>
            <person name="Mohamoud Y."/>
            <person name="Radune D."/>
            <person name="Shvartsbeyn A."/>
            <person name="Daugherty S."/>
            <person name="Dodson R."/>
            <person name="Durkin A.S."/>
            <person name="Harkins D."/>
            <person name="Huot H."/>
            <person name="Kothari S.P."/>
            <person name="Madupu R."/>
            <person name="Li J."/>
            <person name="Nelson W.C."/>
            <person name="Shrivastava S."/>
            <person name="Giglio M.G."/>
            <person name="Haft D."/>
            <person name="Selengut J."/>
            <person name="Fraser-Ligget C."/>
            <person name="Seshadri R."/>
        </authorList>
    </citation>
    <scope>NUCLEOTIDE SEQUENCE [LARGE SCALE GENOMIC DNA]</scope>
    <source>
        <strain>ATCC 35685 / KC583 / Herrer 020/F12,63</strain>
    </source>
</reference>
<protein>
    <recommendedName>
        <fullName evidence="1">Holliday junction branch migration complex subunit RuvB</fullName>
        <ecNumber evidence="1">3.6.4.-</ecNumber>
    </recommendedName>
</protein>
<keyword id="KW-0067">ATP-binding</keyword>
<keyword id="KW-0963">Cytoplasm</keyword>
<keyword id="KW-0227">DNA damage</keyword>
<keyword id="KW-0233">DNA recombination</keyword>
<keyword id="KW-0234">DNA repair</keyword>
<keyword id="KW-0238">DNA-binding</keyword>
<keyword id="KW-0378">Hydrolase</keyword>
<keyword id="KW-0547">Nucleotide-binding</keyword>
<feature type="chain" id="PRO_1000001365" description="Holliday junction branch migration complex subunit RuvB">
    <location>
        <begin position="1"/>
        <end position="369"/>
    </location>
</feature>
<feature type="region of interest" description="Large ATPase domain (RuvB-L)" evidence="1">
    <location>
        <begin position="1"/>
        <end position="184"/>
    </location>
</feature>
<feature type="region of interest" description="Disordered" evidence="2">
    <location>
        <begin position="1"/>
        <end position="21"/>
    </location>
</feature>
<feature type="region of interest" description="Small ATPAse domain (RuvB-S)" evidence="1">
    <location>
        <begin position="185"/>
        <end position="255"/>
    </location>
</feature>
<feature type="region of interest" description="Head domain (RuvB-H)" evidence="1">
    <location>
        <begin position="258"/>
        <end position="369"/>
    </location>
</feature>
<feature type="binding site" evidence="1">
    <location>
        <position position="23"/>
    </location>
    <ligand>
        <name>ATP</name>
        <dbReference type="ChEBI" id="CHEBI:30616"/>
    </ligand>
</feature>
<feature type="binding site" evidence="1">
    <location>
        <position position="24"/>
    </location>
    <ligand>
        <name>ATP</name>
        <dbReference type="ChEBI" id="CHEBI:30616"/>
    </ligand>
</feature>
<feature type="binding site" evidence="1">
    <location>
        <position position="65"/>
    </location>
    <ligand>
        <name>ATP</name>
        <dbReference type="ChEBI" id="CHEBI:30616"/>
    </ligand>
</feature>
<feature type="binding site" evidence="1">
    <location>
        <position position="68"/>
    </location>
    <ligand>
        <name>ATP</name>
        <dbReference type="ChEBI" id="CHEBI:30616"/>
    </ligand>
</feature>
<feature type="binding site" evidence="1">
    <location>
        <position position="69"/>
    </location>
    <ligand>
        <name>ATP</name>
        <dbReference type="ChEBI" id="CHEBI:30616"/>
    </ligand>
</feature>
<feature type="binding site" evidence="1">
    <location>
        <position position="69"/>
    </location>
    <ligand>
        <name>Mg(2+)</name>
        <dbReference type="ChEBI" id="CHEBI:18420"/>
    </ligand>
</feature>
<feature type="binding site" evidence="1">
    <location>
        <position position="70"/>
    </location>
    <ligand>
        <name>ATP</name>
        <dbReference type="ChEBI" id="CHEBI:30616"/>
    </ligand>
</feature>
<feature type="binding site" evidence="1">
    <location>
        <begin position="131"/>
        <end position="133"/>
    </location>
    <ligand>
        <name>ATP</name>
        <dbReference type="ChEBI" id="CHEBI:30616"/>
    </ligand>
</feature>
<feature type="binding site" evidence="1">
    <location>
        <position position="174"/>
    </location>
    <ligand>
        <name>ATP</name>
        <dbReference type="ChEBI" id="CHEBI:30616"/>
    </ligand>
</feature>
<feature type="binding site" evidence="1">
    <location>
        <position position="184"/>
    </location>
    <ligand>
        <name>ATP</name>
        <dbReference type="ChEBI" id="CHEBI:30616"/>
    </ligand>
</feature>
<feature type="binding site" evidence="1">
    <location>
        <position position="221"/>
    </location>
    <ligand>
        <name>ATP</name>
        <dbReference type="ChEBI" id="CHEBI:30616"/>
    </ligand>
</feature>
<feature type="binding site" evidence="1">
    <location>
        <position position="294"/>
    </location>
    <ligand>
        <name>DNA</name>
        <dbReference type="ChEBI" id="CHEBI:16991"/>
    </ligand>
</feature>
<feature type="binding site" evidence="1">
    <location>
        <position position="313"/>
    </location>
    <ligand>
        <name>DNA</name>
        <dbReference type="ChEBI" id="CHEBI:16991"/>
    </ligand>
</feature>
<feature type="binding site" evidence="1">
    <location>
        <position position="318"/>
    </location>
    <ligand>
        <name>DNA</name>
        <dbReference type="ChEBI" id="CHEBI:16991"/>
    </ligand>
</feature>
<evidence type="ECO:0000255" key="1">
    <source>
        <dbReference type="HAMAP-Rule" id="MF_00016"/>
    </source>
</evidence>
<evidence type="ECO:0000256" key="2">
    <source>
        <dbReference type="SAM" id="MobiDB-lite"/>
    </source>
</evidence>
<accession>A1UR84</accession>
<gene>
    <name evidence="1" type="primary">ruvB</name>
    <name type="ordered locus">BARBAKC583_0149</name>
</gene>
<proteinExistence type="inferred from homology"/>
<dbReference type="EC" id="3.6.4.-" evidence="1"/>
<dbReference type="EMBL" id="CP000524">
    <property type="protein sequence ID" value="ABM45282.1"/>
    <property type="molecule type" value="Genomic_DNA"/>
</dbReference>
<dbReference type="RefSeq" id="WP_005765934.1">
    <property type="nucleotide sequence ID" value="NC_008783.1"/>
</dbReference>
<dbReference type="SMR" id="A1UR84"/>
<dbReference type="STRING" id="360095.BARBAKC583_0149"/>
<dbReference type="GeneID" id="4684774"/>
<dbReference type="KEGG" id="bbk:BARBAKC583_0149"/>
<dbReference type="PATRIC" id="fig|360095.6.peg.149"/>
<dbReference type="eggNOG" id="COG2255">
    <property type="taxonomic scope" value="Bacteria"/>
</dbReference>
<dbReference type="HOGENOM" id="CLU_055599_1_0_5"/>
<dbReference type="OrthoDB" id="9804478at2"/>
<dbReference type="Proteomes" id="UP000000643">
    <property type="component" value="Chromosome"/>
</dbReference>
<dbReference type="GO" id="GO:0005737">
    <property type="term" value="C:cytoplasm"/>
    <property type="evidence" value="ECO:0007669"/>
    <property type="project" value="UniProtKB-SubCell"/>
</dbReference>
<dbReference type="GO" id="GO:0048476">
    <property type="term" value="C:Holliday junction resolvase complex"/>
    <property type="evidence" value="ECO:0007669"/>
    <property type="project" value="UniProtKB-UniRule"/>
</dbReference>
<dbReference type="GO" id="GO:0005524">
    <property type="term" value="F:ATP binding"/>
    <property type="evidence" value="ECO:0007669"/>
    <property type="project" value="UniProtKB-UniRule"/>
</dbReference>
<dbReference type="GO" id="GO:0016887">
    <property type="term" value="F:ATP hydrolysis activity"/>
    <property type="evidence" value="ECO:0007669"/>
    <property type="project" value="InterPro"/>
</dbReference>
<dbReference type="GO" id="GO:0000400">
    <property type="term" value="F:four-way junction DNA binding"/>
    <property type="evidence" value="ECO:0007669"/>
    <property type="project" value="UniProtKB-UniRule"/>
</dbReference>
<dbReference type="GO" id="GO:0009378">
    <property type="term" value="F:four-way junction helicase activity"/>
    <property type="evidence" value="ECO:0007669"/>
    <property type="project" value="InterPro"/>
</dbReference>
<dbReference type="GO" id="GO:0006310">
    <property type="term" value="P:DNA recombination"/>
    <property type="evidence" value="ECO:0007669"/>
    <property type="project" value="UniProtKB-UniRule"/>
</dbReference>
<dbReference type="GO" id="GO:0006281">
    <property type="term" value="P:DNA repair"/>
    <property type="evidence" value="ECO:0007669"/>
    <property type="project" value="UniProtKB-UniRule"/>
</dbReference>
<dbReference type="CDD" id="cd00009">
    <property type="entry name" value="AAA"/>
    <property type="match status" value="1"/>
</dbReference>
<dbReference type="Gene3D" id="1.10.8.60">
    <property type="match status" value="1"/>
</dbReference>
<dbReference type="Gene3D" id="3.40.50.300">
    <property type="entry name" value="P-loop containing nucleotide triphosphate hydrolases"/>
    <property type="match status" value="1"/>
</dbReference>
<dbReference type="Gene3D" id="1.10.10.10">
    <property type="entry name" value="Winged helix-like DNA-binding domain superfamily/Winged helix DNA-binding domain"/>
    <property type="match status" value="1"/>
</dbReference>
<dbReference type="HAMAP" id="MF_00016">
    <property type="entry name" value="DNA_HJ_migration_RuvB"/>
    <property type="match status" value="1"/>
</dbReference>
<dbReference type="InterPro" id="IPR003593">
    <property type="entry name" value="AAA+_ATPase"/>
</dbReference>
<dbReference type="InterPro" id="IPR041445">
    <property type="entry name" value="AAA_lid_4"/>
</dbReference>
<dbReference type="InterPro" id="IPR004605">
    <property type="entry name" value="DNA_helicase_Holl-junc_RuvB"/>
</dbReference>
<dbReference type="InterPro" id="IPR027417">
    <property type="entry name" value="P-loop_NTPase"/>
</dbReference>
<dbReference type="InterPro" id="IPR008824">
    <property type="entry name" value="RuvB-like_N"/>
</dbReference>
<dbReference type="InterPro" id="IPR008823">
    <property type="entry name" value="RuvB_C"/>
</dbReference>
<dbReference type="InterPro" id="IPR036388">
    <property type="entry name" value="WH-like_DNA-bd_sf"/>
</dbReference>
<dbReference type="InterPro" id="IPR036390">
    <property type="entry name" value="WH_DNA-bd_sf"/>
</dbReference>
<dbReference type="NCBIfam" id="NF000868">
    <property type="entry name" value="PRK00080.1"/>
    <property type="match status" value="1"/>
</dbReference>
<dbReference type="NCBIfam" id="TIGR00635">
    <property type="entry name" value="ruvB"/>
    <property type="match status" value="1"/>
</dbReference>
<dbReference type="PANTHER" id="PTHR42848">
    <property type="match status" value="1"/>
</dbReference>
<dbReference type="PANTHER" id="PTHR42848:SF1">
    <property type="entry name" value="HOLLIDAY JUNCTION BRANCH MIGRATION COMPLEX SUBUNIT RUVB"/>
    <property type="match status" value="1"/>
</dbReference>
<dbReference type="Pfam" id="PF17864">
    <property type="entry name" value="AAA_lid_4"/>
    <property type="match status" value="1"/>
</dbReference>
<dbReference type="Pfam" id="PF05491">
    <property type="entry name" value="RuvB_C"/>
    <property type="match status" value="1"/>
</dbReference>
<dbReference type="Pfam" id="PF05496">
    <property type="entry name" value="RuvB_N"/>
    <property type="match status" value="1"/>
</dbReference>
<dbReference type="SMART" id="SM00382">
    <property type="entry name" value="AAA"/>
    <property type="match status" value="1"/>
</dbReference>
<dbReference type="SUPFAM" id="SSF52540">
    <property type="entry name" value="P-loop containing nucleoside triphosphate hydrolases"/>
    <property type="match status" value="1"/>
</dbReference>
<dbReference type="SUPFAM" id="SSF46785">
    <property type="entry name" value="Winged helix' DNA-binding domain"/>
    <property type="match status" value="1"/>
</dbReference>
<organism>
    <name type="scientific">Bartonella bacilliformis (strain ATCC 35685 / KC583 / Herrer 020/F12,63)</name>
    <dbReference type="NCBI Taxonomy" id="360095"/>
    <lineage>
        <taxon>Bacteria</taxon>
        <taxon>Pseudomonadati</taxon>
        <taxon>Pseudomonadota</taxon>
        <taxon>Alphaproteobacteria</taxon>
        <taxon>Hyphomicrobiales</taxon>
        <taxon>Bartonellaceae</taxon>
        <taxon>Bartonella</taxon>
    </lineage>
</organism>
<sequence>MHKNENNRLLGSVSLPDDPDRSLRPQVLDDFIGQEAARANLKIFIEAAKTRHEALDHVLFVGPPGLGKTTLSQIMAKELGVNFRSTSGPVIAKAGDLAALLTNLEERDVLFIDEIHRLNPAIEEILYPAMEDYQLDLIIGEGPAARSVKIDLAKFTLVAATTRLGLLTTPLRDRFGIPIRLNFYTIEELEYIVKRNARLFSVPISDDGAHEIARRARGTPRIAGRLLRRVCDFALVKQAKTIDREIADTALSRLEVDHLGLDPLDRNYLMLIADVFLGGPVGIETIAAALSEPRDAIEDIIEPYLLQQGFIQRTPRGRIITEKAWAHLGLRAPTQPAASATLSTPDLSTSSDVPVSSLIQKHLWEKDYD</sequence>
<name>RUVB_BARBK</name>
<comment type="function">
    <text evidence="1">The RuvA-RuvB-RuvC complex processes Holliday junction (HJ) DNA during genetic recombination and DNA repair, while the RuvA-RuvB complex plays an important role in the rescue of blocked DNA replication forks via replication fork reversal (RFR). RuvA specifically binds to HJ cruciform DNA, conferring on it an open structure. The RuvB hexamer acts as an ATP-dependent pump, pulling dsDNA into and through the RuvAB complex. RuvB forms 2 homohexamers on either side of HJ DNA bound by 1 or 2 RuvA tetramers; 4 subunits per hexamer contact DNA at a time. Coordinated motions by a converter formed by DNA-disengaged RuvB subunits stimulates ATP hydrolysis and nucleotide exchange. Immobilization of the converter enables RuvB to convert the ATP-contained energy into a lever motion, pulling 2 nucleotides of DNA out of the RuvA tetramer per ATP hydrolyzed, thus driving DNA branch migration. The RuvB motors rotate together with the DNA substrate, which together with the progressing nucleotide cycle form the mechanistic basis for DNA recombination by continuous HJ branch migration. Branch migration allows RuvC to scan DNA until it finds its consensus sequence, where it cleaves and resolves cruciform DNA.</text>
</comment>
<comment type="catalytic activity">
    <reaction evidence="1">
        <text>ATP + H2O = ADP + phosphate + H(+)</text>
        <dbReference type="Rhea" id="RHEA:13065"/>
        <dbReference type="ChEBI" id="CHEBI:15377"/>
        <dbReference type="ChEBI" id="CHEBI:15378"/>
        <dbReference type="ChEBI" id="CHEBI:30616"/>
        <dbReference type="ChEBI" id="CHEBI:43474"/>
        <dbReference type="ChEBI" id="CHEBI:456216"/>
    </reaction>
</comment>
<comment type="subunit">
    <text evidence="1">Homohexamer. Forms an RuvA(8)-RuvB(12)-Holliday junction (HJ) complex. HJ DNA is sandwiched between 2 RuvA tetramers; dsDNA enters through RuvA and exits via RuvB. An RuvB hexamer assembles on each DNA strand where it exits the tetramer. Each RuvB hexamer is contacted by two RuvA subunits (via domain III) on 2 adjacent RuvB subunits; this complex drives branch migration. In the full resolvosome a probable DNA-RuvA(4)-RuvB(12)-RuvC(2) complex forms which resolves the HJ.</text>
</comment>
<comment type="subcellular location">
    <subcellularLocation>
        <location evidence="1">Cytoplasm</location>
    </subcellularLocation>
</comment>
<comment type="domain">
    <text evidence="1">Has 3 domains, the large (RuvB-L) and small ATPase (RuvB-S) domains and the C-terminal head (RuvB-H) domain. The head domain binds DNA, while the ATPase domains jointly bind ATP, ADP or are empty depending on the state of the subunit in the translocation cycle. During a single DNA translocation step the structure of each domain remains the same, but their relative positions change.</text>
</comment>
<comment type="similarity">
    <text evidence="1">Belongs to the RuvB family.</text>
</comment>